<comment type="function">
    <text evidence="1">Catalyzes the phosphorolysis of diverse nucleosides, yielding D-ribose 1-phosphate and the respective free bases. Can use uridine, adenosine, guanosine, cytidine, thymidine, inosine and xanthosine as substrates. Also catalyzes the reverse reactions.</text>
</comment>
<comment type="catalytic activity">
    <reaction evidence="1">
        <text>a purine D-ribonucleoside + phosphate = a purine nucleobase + alpha-D-ribose 1-phosphate</text>
        <dbReference type="Rhea" id="RHEA:19805"/>
        <dbReference type="ChEBI" id="CHEBI:26386"/>
        <dbReference type="ChEBI" id="CHEBI:43474"/>
        <dbReference type="ChEBI" id="CHEBI:57720"/>
        <dbReference type="ChEBI" id="CHEBI:142355"/>
        <dbReference type="EC" id="2.4.2.1"/>
    </reaction>
</comment>
<comment type="catalytic activity">
    <reaction evidence="1">
        <text>adenosine + phosphate = alpha-D-ribose 1-phosphate + adenine</text>
        <dbReference type="Rhea" id="RHEA:27642"/>
        <dbReference type="ChEBI" id="CHEBI:16335"/>
        <dbReference type="ChEBI" id="CHEBI:16708"/>
        <dbReference type="ChEBI" id="CHEBI:43474"/>
        <dbReference type="ChEBI" id="CHEBI:57720"/>
        <dbReference type="EC" id="2.4.2.1"/>
    </reaction>
</comment>
<comment type="catalytic activity">
    <reaction evidence="1">
        <text>cytidine + phosphate = cytosine + alpha-D-ribose 1-phosphate</text>
        <dbReference type="Rhea" id="RHEA:52540"/>
        <dbReference type="ChEBI" id="CHEBI:16040"/>
        <dbReference type="ChEBI" id="CHEBI:17562"/>
        <dbReference type="ChEBI" id="CHEBI:43474"/>
        <dbReference type="ChEBI" id="CHEBI:57720"/>
        <dbReference type="EC" id="2.4.2.2"/>
    </reaction>
</comment>
<comment type="catalytic activity">
    <reaction evidence="1">
        <text>guanosine + phosphate = alpha-D-ribose 1-phosphate + guanine</text>
        <dbReference type="Rhea" id="RHEA:13233"/>
        <dbReference type="ChEBI" id="CHEBI:16235"/>
        <dbReference type="ChEBI" id="CHEBI:16750"/>
        <dbReference type="ChEBI" id="CHEBI:43474"/>
        <dbReference type="ChEBI" id="CHEBI:57720"/>
        <dbReference type="EC" id="2.4.2.1"/>
    </reaction>
</comment>
<comment type="catalytic activity">
    <reaction evidence="1">
        <text>inosine + phosphate = alpha-D-ribose 1-phosphate + hypoxanthine</text>
        <dbReference type="Rhea" id="RHEA:27646"/>
        <dbReference type="ChEBI" id="CHEBI:17368"/>
        <dbReference type="ChEBI" id="CHEBI:17596"/>
        <dbReference type="ChEBI" id="CHEBI:43474"/>
        <dbReference type="ChEBI" id="CHEBI:57720"/>
        <dbReference type="EC" id="2.4.2.1"/>
    </reaction>
</comment>
<comment type="catalytic activity">
    <reaction evidence="1">
        <text>thymidine + phosphate = 2-deoxy-alpha-D-ribose 1-phosphate + thymine</text>
        <dbReference type="Rhea" id="RHEA:16037"/>
        <dbReference type="ChEBI" id="CHEBI:17748"/>
        <dbReference type="ChEBI" id="CHEBI:17821"/>
        <dbReference type="ChEBI" id="CHEBI:43474"/>
        <dbReference type="ChEBI" id="CHEBI:57259"/>
        <dbReference type="EC" id="2.4.2.2"/>
    </reaction>
</comment>
<comment type="catalytic activity">
    <reaction evidence="1">
        <text>uridine + phosphate = alpha-D-ribose 1-phosphate + uracil</text>
        <dbReference type="Rhea" id="RHEA:24388"/>
        <dbReference type="ChEBI" id="CHEBI:16704"/>
        <dbReference type="ChEBI" id="CHEBI:17568"/>
        <dbReference type="ChEBI" id="CHEBI:43474"/>
        <dbReference type="ChEBI" id="CHEBI:57720"/>
        <dbReference type="EC" id="2.4.2.2"/>
    </reaction>
</comment>
<comment type="catalytic activity">
    <reaction evidence="1">
        <text>xanthosine + phosphate = alpha-D-ribose 1-phosphate + xanthine</text>
        <dbReference type="Rhea" id="RHEA:27638"/>
        <dbReference type="ChEBI" id="CHEBI:17712"/>
        <dbReference type="ChEBI" id="CHEBI:18107"/>
        <dbReference type="ChEBI" id="CHEBI:43474"/>
        <dbReference type="ChEBI" id="CHEBI:57720"/>
        <dbReference type="EC" id="2.4.2.1"/>
    </reaction>
</comment>
<comment type="similarity">
    <text evidence="1">Belongs to the nucleoside phosphorylase PpnP family.</text>
</comment>
<sequence length="94" mass="10261">MLQSNEYFSGKVKSIGFSSSSTGRASVGVMVEGEYTFSTAEPEEMTVINGALNVLLPDATDWQVYEAGSVFNVPGHSEFHLQVAEPTSYLCRYL</sequence>
<name>PPNP_SHIDS</name>
<organism>
    <name type="scientific">Shigella dysenteriae serotype 1 (strain Sd197)</name>
    <dbReference type="NCBI Taxonomy" id="300267"/>
    <lineage>
        <taxon>Bacteria</taxon>
        <taxon>Pseudomonadati</taxon>
        <taxon>Pseudomonadota</taxon>
        <taxon>Gammaproteobacteria</taxon>
        <taxon>Enterobacterales</taxon>
        <taxon>Enterobacteriaceae</taxon>
        <taxon>Shigella</taxon>
    </lineage>
</organism>
<dbReference type="EC" id="2.4.2.1" evidence="1"/>
<dbReference type="EC" id="2.4.2.2" evidence="1"/>
<dbReference type="EMBL" id="CP000034">
    <property type="protein sequence ID" value="ABB60567.1"/>
    <property type="molecule type" value="Genomic_DNA"/>
</dbReference>
<dbReference type="RefSeq" id="WP_000941939.1">
    <property type="nucleotide sequence ID" value="NC_007606.1"/>
</dbReference>
<dbReference type="RefSeq" id="YP_402056.1">
    <property type="nucleotide sequence ID" value="NC_007606.1"/>
</dbReference>
<dbReference type="SMR" id="Q32JE0"/>
<dbReference type="STRING" id="300267.SDY_0352"/>
<dbReference type="EnsemblBacteria" id="ABB60567">
    <property type="protein sequence ID" value="ABB60567"/>
    <property type="gene ID" value="SDY_0352"/>
</dbReference>
<dbReference type="KEGG" id="sdy:SDY_0352"/>
<dbReference type="PATRIC" id="fig|300267.13.peg.413"/>
<dbReference type="HOGENOM" id="CLU_157874_0_0_6"/>
<dbReference type="Proteomes" id="UP000002716">
    <property type="component" value="Chromosome"/>
</dbReference>
<dbReference type="GO" id="GO:0005829">
    <property type="term" value="C:cytosol"/>
    <property type="evidence" value="ECO:0007669"/>
    <property type="project" value="TreeGrafter"/>
</dbReference>
<dbReference type="GO" id="GO:0047975">
    <property type="term" value="F:guanosine phosphorylase activity"/>
    <property type="evidence" value="ECO:0007669"/>
    <property type="project" value="UniProtKB-EC"/>
</dbReference>
<dbReference type="GO" id="GO:0004731">
    <property type="term" value="F:purine-nucleoside phosphorylase activity"/>
    <property type="evidence" value="ECO:0007669"/>
    <property type="project" value="UniProtKB-UniRule"/>
</dbReference>
<dbReference type="GO" id="GO:0009032">
    <property type="term" value="F:thymidine phosphorylase activity"/>
    <property type="evidence" value="ECO:0007669"/>
    <property type="project" value="UniProtKB-EC"/>
</dbReference>
<dbReference type="GO" id="GO:0004850">
    <property type="term" value="F:uridine phosphorylase activity"/>
    <property type="evidence" value="ECO:0007669"/>
    <property type="project" value="UniProtKB-EC"/>
</dbReference>
<dbReference type="CDD" id="cd20296">
    <property type="entry name" value="cupin_PpnP-like"/>
    <property type="match status" value="1"/>
</dbReference>
<dbReference type="FunFam" id="2.60.120.10:FF:000016">
    <property type="entry name" value="Pyrimidine/purine nucleoside phosphorylase"/>
    <property type="match status" value="1"/>
</dbReference>
<dbReference type="Gene3D" id="2.60.120.10">
    <property type="entry name" value="Jelly Rolls"/>
    <property type="match status" value="1"/>
</dbReference>
<dbReference type="HAMAP" id="MF_01537">
    <property type="entry name" value="Nucleos_phosphorylase_PpnP"/>
    <property type="match status" value="1"/>
</dbReference>
<dbReference type="InterPro" id="IPR009664">
    <property type="entry name" value="Ppnp"/>
</dbReference>
<dbReference type="InterPro" id="IPR014710">
    <property type="entry name" value="RmlC-like_jellyroll"/>
</dbReference>
<dbReference type="InterPro" id="IPR011051">
    <property type="entry name" value="RmlC_Cupin_sf"/>
</dbReference>
<dbReference type="NCBIfam" id="NF007875">
    <property type="entry name" value="PRK10579.1"/>
    <property type="match status" value="1"/>
</dbReference>
<dbReference type="PANTHER" id="PTHR36540">
    <property type="entry name" value="PYRIMIDINE/PURINE NUCLEOSIDE PHOSPHORYLASE"/>
    <property type="match status" value="1"/>
</dbReference>
<dbReference type="PANTHER" id="PTHR36540:SF1">
    <property type="entry name" value="PYRIMIDINE_PURINE NUCLEOSIDE PHOSPHORYLASE"/>
    <property type="match status" value="1"/>
</dbReference>
<dbReference type="Pfam" id="PF06865">
    <property type="entry name" value="Ppnp"/>
    <property type="match status" value="1"/>
</dbReference>
<dbReference type="SUPFAM" id="SSF51182">
    <property type="entry name" value="RmlC-like cupins"/>
    <property type="match status" value="1"/>
</dbReference>
<feature type="chain" id="PRO_0000298730" description="Pyrimidine/purine nucleoside phosphorylase">
    <location>
        <begin position="1"/>
        <end position="94"/>
    </location>
</feature>
<evidence type="ECO:0000255" key="1">
    <source>
        <dbReference type="HAMAP-Rule" id="MF_01537"/>
    </source>
</evidence>
<reference key="1">
    <citation type="journal article" date="2005" name="Nucleic Acids Res.">
        <title>Genome dynamics and diversity of Shigella species, the etiologic agents of bacillary dysentery.</title>
        <authorList>
            <person name="Yang F."/>
            <person name="Yang J."/>
            <person name="Zhang X."/>
            <person name="Chen L."/>
            <person name="Jiang Y."/>
            <person name="Yan Y."/>
            <person name="Tang X."/>
            <person name="Wang J."/>
            <person name="Xiong Z."/>
            <person name="Dong J."/>
            <person name="Xue Y."/>
            <person name="Zhu Y."/>
            <person name="Xu X."/>
            <person name="Sun L."/>
            <person name="Chen S."/>
            <person name="Nie H."/>
            <person name="Peng J."/>
            <person name="Xu J."/>
            <person name="Wang Y."/>
            <person name="Yuan Z."/>
            <person name="Wen Y."/>
            <person name="Yao Z."/>
            <person name="Shen Y."/>
            <person name="Qiang B."/>
            <person name="Hou Y."/>
            <person name="Yu J."/>
            <person name="Jin Q."/>
        </authorList>
    </citation>
    <scope>NUCLEOTIDE SEQUENCE [LARGE SCALE GENOMIC DNA]</scope>
    <source>
        <strain>Sd197</strain>
    </source>
</reference>
<keyword id="KW-0328">Glycosyltransferase</keyword>
<keyword id="KW-1185">Reference proteome</keyword>
<keyword id="KW-0808">Transferase</keyword>
<protein>
    <recommendedName>
        <fullName evidence="1">Pyrimidine/purine nucleoside phosphorylase</fullName>
        <ecNumber evidence="1">2.4.2.1</ecNumber>
        <ecNumber evidence="1">2.4.2.2</ecNumber>
    </recommendedName>
    <alternativeName>
        <fullName evidence="1">Adenosine phosphorylase</fullName>
    </alternativeName>
    <alternativeName>
        <fullName evidence="1">Cytidine phosphorylase</fullName>
    </alternativeName>
    <alternativeName>
        <fullName evidence="1">Guanosine phosphorylase</fullName>
    </alternativeName>
    <alternativeName>
        <fullName evidence="1">Inosine phosphorylase</fullName>
    </alternativeName>
    <alternativeName>
        <fullName evidence="1">Thymidine phosphorylase</fullName>
    </alternativeName>
    <alternativeName>
        <fullName evidence="1">Uridine phosphorylase</fullName>
    </alternativeName>
    <alternativeName>
        <fullName evidence="1">Xanthosine phosphorylase</fullName>
    </alternativeName>
</protein>
<proteinExistence type="inferred from homology"/>
<accession>Q32JE0</accession>
<gene>
    <name evidence="1" type="primary">ppnP</name>
    <name type="ordered locus">SDY_0352</name>
</gene>